<proteinExistence type="inferred from homology"/>
<dbReference type="EMBL" id="AE000782">
    <property type="protein sequence ID" value="AAB90181.1"/>
    <property type="molecule type" value="Genomic_DNA"/>
</dbReference>
<dbReference type="PIR" id="H69383">
    <property type="entry name" value="H69383"/>
</dbReference>
<dbReference type="RefSeq" id="WP_010878572.1">
    <property type="nucleotide sequence ID" value="NC_000917.1"/>
</dbReference>
<dbReference type="SMR" id="O29190"/>
<dbReference type="PaxDb" id="224325-AF_1072"/>
<dbReference type="DNASU" id="1484296"/>
<dbReference type="EnsemblBacteria" id="AAB90181">
    <property type="protein sequence ID" value="AAB90181"/>
    <property type="gene ID" value="AF_1072"/>
</dbReference>
<dbReference type="KEGG" id="afu:AF_1072"/>
<dbReference type="eggNOG" id="arCOG02411">
    <property type="taxonomic scope" value="Archaea"/>
</dbReference>
<dbReference type="HOGENOM" id="CLU_114047_3_0_2"/>
<dbReference type="OrthoDB" id="133743at2157"/>
<dbReference type="PhylomeDB" id="O29190"/>
<dbReference type="Proteomes" id="UP000002199">
    <property type="component" value="Chromosome"/>
</dbReference>
<dbReference type="Gene3D" id="3.30.160.250">
    <property type="match status" value="1"/>
</dbReference>
<dbReference type="InterPro" id="IPR031807">
    <property type="entry name" value="HicB-like"/>
</dbReference>
<dbReference type="InterPro" id="IPR051404">
    <property type="entry name" value="TA_system_antitoxin"/>
</dbReference>
<dbReference type="InterPro" id="IPR035069">
    <property type="entry name" value="TTHA1013/TTHA0281-like"/>
</dbReference>
<dbReference type="PANTHER" id="PTHR34504">
    <property type="entry name" value="ANTITOXIN HICB"/>
    <property type="match status" value="1"/>
</dbReference>
<dbReference type="PANTHER" id="PTHR34504:SF2">
    <property type="entry name" value="UPF0150 PROTEIN SSL0259"/>
    <property type="match status" value="1"/>
</dbReference>
<dbReference type="Pfam" id="PF15919">
    <property type="entry name" value="HicB_lk_antitox"/>
    <property type="match status" value="1"/>
</dbReference>
<dbReference type="SUPFAM" id="SSF143100">
    <property type="entry name" value="TTHA1013/TTHA0281-like"/>
    <property type="match status" value="1"/>
</dbReference>
<accession>O29190</accession>
<gene>
    <name type="ordered locus">AF_1072</name>
</gene>
<evidence type="ECO:0000305" key="1"/>
<organism>
    <name type="scientific">Archaeoglobus fulgidus (strain ATCC 49558 / DSM 4304 / JCM 9628 / NBRC 100126 / VC-16)</name>
    <dbReference type="NCBI Taxonomy" id="224325"/>
    <lineage>
        <taxon>Archaea</taxon>
        <taxon>Methanobacteriati</taxon>
        <taxon>Methanobacteriota</taxon>
        <taxon>Archaeoglobi</taxon>
        <taxon>Archaeoglobales</taxon>
        <taxon>Archaeoglobaceae</taxon>
        <taxon>Archaeoglobus</taxon>
    </lineage>
</organism>
<keyword id="KW-1185">Reference proteome</keyword>
<sequence>MKFAIVIEKDEDGYYVVKVPSLPGCHTQAKSLDELMERVKEAIELYLEVKKNVEDGEFIGVQVVEVKTG</sequence>
<reference key="1">
    <citation type="journal article" date="1997" name="Nature">
        <title>The complete genome sequence of the hyperthermophilic, sulphate-reducing archaeon Archaeoglobus fulgidus.</title>
        <authorList>
            <person name="Klenk H.-P."/>
            <person name="Clayton R.A."/>
            <person name="Tomb J.-F."/>
            <person name="White O."/>
            <person name="Nelson K.E."/>
            <person name="Ketchum K.A."/>
            <person name="Dodson R.J."/>
            <person name="Gwinn M.L."/>
            <person name="Hickey E.K."/>
            <person name="Peterson J.D."/>
            <person name="Richardson D.L."/>
            <person name="Kerlavage A.R."/>
            <person name="Graham D.E."/>
            <person name="Kyrpides N.C."/>
            <person name="Fleischmann R.D."/>
            <person name="Quackenbush J."/>
            <person name="Lee N.H."/>
            <person name="Sutton G.G."/>
            <person name="Gill S.R."/>
            <person name="Kirkness E.F."/>
            <person name="Dougherty B.A."/>
            <person name="McKenney K."/>
            <person name="Adams M.D."/>
            <person name="Loftus B.J."/>
            <person name="Peterson S.N."/>
            <person name="Reich C.I."/>
            <person name="McNeil L.K."/>
            <person name="Badger J.H."/>
            <person name="Glodek A."/>
            <person name="Zhou L."/>
            <person name="Overbeek R."/>
            <person name="Gocayne J.D."/>
            <person name="Weidman J.F."/>
            <person name="McDonald L.A."/>
            <person name="Utterback T.R."/>
            <person name="Cotton M.D."/>
            <person name="Spriggs T."/>
            <person name="Artiach P."/>
            <person name="Kaine B.P."/>
            <person name="Sykes S.M."/>
            <person name="Sadow P.W."/>
            <person name="D'Andrea K.P."/>
            <person name="Bowman C."/>
            <person name="Fujii C."/>
            <person name="Garland S.A."/>
            <person name="Mason T.M."/>
            <person name="Olsen G.J."/>
            <person name="Fraser C.M."/>
            <person name="Smith H.O."/>
            <person name="Woese C.R."/>
            <person name="Venter J.C."/>
        </authorList>
    </citation>
    <scope>NUCLEOTIDE SEQUENCE [LARGE SCALE GENOMIC DNA]</scope>
    <source>
        <strain>ATCC 49558 / DSM 4304 / JCM 9628 / NBRC 100126 / VC-16</strain>
    </source>
</reference>
<name>Y1072_ARCFU</name>
<feature type="chain" id="PRO_0000157942" description="UPF0150 protein AF_1072">
    <location>
        <begin position="1"/>
        <end position="69"/>
    </location>
</feature>
<protein>
    <recommendedName>
        <fullName>UPF0150 protein AF_1072</fullName>
    </recommendedName>
</protein>
<comment type="similarity">
    <text evidence="1">Belongs to the UPF0150 family.</text>
</comment>